<keyword id="KW-0131">Cell cycle</keyword>
<keyword id="KW-0132">Cell division</keyword>
<keyword id="KW-1003">Cell membrane</keyword>
<keyword id="KW-0133">Cell shape</keyword>
<keyword id="KW-0961">Cell wall biogenesis/degradation</keyword>
<keyword id="KW-0328">Glycosyltransferase</keyword>
<keyword id="KW-0472">Membrane</keyword>
<keyword id="KW-0573">Peptidoglycan synthesis</keyword>
<keyword id="KW-1185">Reference proteome</keyword>
<keyword id="KW-0808">Transferase</keyword>
<feature type="chain" id="PRO_1000074476" description="UDP-N-acetylglucosamine--N-acetylmuramyl-(pentapeptide) pyrophosphoryl-undecaprenol N-acetylglucosamine transferase">
    <location>
        <begin position="1"/>
        <end position="356"/>
    </location>
</feature>
<feature type="binding site" evidence="1">
    <location>
        <position position="195"/>
    </location>
    <ligand>
        <name>UDP-N-acetyl-alpha-D-glucosamine</name>
        <dbReference type="ChEBI" id="CHEBI:57705"/>
    </ligand>
</feature>
<feature type="binding site" evidence="1">
    <location>
        <position position="287"/>
    </location>
    <ligand>
        <name>UDP-N-acetyl-alpha-D-glucosamine</name>
        <dbReference type="ChEBI" id="CHEBI:57705"/>
    </ligand>
</feature>
<reference key="1">
    <citation type="journal article" date="2007" name="J. Bacteriol.">
        <title>Genome-wide transcriptional changes in Streptococcus gordonii in response to competence signaling peptide.</title>
        <authorList>
            <person name="Vickerman M.M."/>
            <person name="Iobst S."/>
            <person name="Jesionowski A.M."/>
            <person name="Gill S.R."/>
        </authorList>
    </citation>
    <scope>NUCLEOTIDE SEQUENCE [LARGE SCALE GENOMIC DNA]</scope>
    <source>
        <strain>Challis / ATCC 35105 / BCRC 15272 / CH1 / DL1 / V288</strain>
    </source>
</reference>
<gene>
    <name evidence="1" type="primary">murG</name>
    <name type="ordered locus">SGO_0672</name>
</gene>
<dbReference type="EC" id="2.4.1.227" evidence="1"/>
<dbReference type="EMBL" id="CP000725">
    <property type="protein sequence ID" value="ABV10106.1"/>
    <property type="molecule type" value="Genomic_DNA"/>
</dbReference>
<dbReference type="RefSeq" id="WP_012000147.1">
    <property type="nucleotide sequence ID" value="NC_009785.1"/>
</dbReference>
<dbReference type="SMR" id="A8AW15"/>
<dbReference type="STRING" id="467705.SGO_0672"/>
<dbReference type="CAZy" id="GT28">
    <property type="family name" value="Glycosyltransferase Family 28"/>
</dbReference>
<dbReference type="KEGG" id="sgo:SGO_0672"/>
<dbReference type="eggNOG" id="COG0707">
    <property type="taxonomic scope" value="Bacteria"/>
</dbReference>
<dbReference type="HOGENOM" id="CLU_037404_0_0_9"/>
<dbReference type="UniPathway" id="UPA00219"/>
<dbReference type="Proteomes" id="UP000001131">
    <property type="component" value="Chromosome"/>
</dbReference>
<dbReference type="GO" id="GO:0005886">
    <property type="term" value="C:plasma membrane"/>
    <property type="evidence" value="ECO:0007669"/>
    <property type="project" value="UniProtKB-SubCell"/>
</dbReference>
<dbReference type="GO" id="GO:0050511">
    <property type="term" value="F:undecaprenyldiphospho-muramoylpentapeptide beta-N-acetylglucosaminyltransferase activity"/>
    <property type="evidence" value="ECO:0007669"/>
    <property type="project" value="UniProtKB-UniRule"/>
</dbReference>
<dbReference type="GO" id="GO:0005975">
    <property type="term" value="P:carbohydrate metabolic process"/>
    <property type="evidence" value="ECO:0007669"/>
    <property type="project" value="InterPro"/>
</dbReference>
<dbReference type="GO" id="GO:0051301">
    <property type="term" value="P:cell division"/>
    <property type="evidence" value="ECO:0007669"/>
    <property type="project" value="UniProtKB-KW"/>
</dbReference>
<dbReference type="GO" id="GO:0071555">
    <property type="term" value="P:cell wall organization"/>
    <property type="evidence" value="ECO:0007669"/>
    <property type="project" value="UniProtKB-KW"/>
</dbReference>
<dbReference type="GO" id="GO:0030259">
    <property type="term" value="P:lipid glycosylation"/>
    <property type="evidence" value="ECO:0007669"/>
    <property type="project" value="UniProtKB-UniRule"/>
</dbReference>
<dbReference type="GO" id="GO:0009252">
    <property type="term" value="P:peptidoglycan biosynthetic process"/>
    <property type="evidence" value="ECO:0007669"/>
    <property type="project" value="UniProtKB-UniRule"/>
</dbReference>
<dbReference type="GO" id="GO:0008360">
    <property type="term" value="P:regulation of cell shape"/>
    <property type="evidence" value="ECO:0007669"/>
    <property type="project" value="UniProtKB-KW"/>
</dbReference>
<dbReference type="CDD" id="cd03785">
    <property type="entry name" value="GT28_MurG"/>
    <property type="match status" value="1"/>
</dbReference>
<dbReference type="Gene3D" id="3.40.50.2000">
    <property type="entry name" value="Glycogen Phosphorylase B"/>
    <property type="match status" value="2"/>
</dbReference>
<dbReference type="HAMAP" id="MF_00033">
    <property type="entry name" value="MurG"/>
    <property type="match status" value="1"/>
</dbReference>
<dbReference type="InterPro" id="IPR006009">
    <property type="entry name" value="GlcNAc_MurG"/>
</dbReference>
<dbReference type="InterPro" id="IPR007235">
    <property type="entry name" value="Glyco_trans_28_C"/>
</dbReference>
<dbReference type="InterPro" id="IPR004276">
    <property type="entry name" value="GlycoTrans_28_N"/>
</dbReference>
<dbReference type="PANTHER" id="PTHR21015:SF27">
    <property type="entry name" value="UDP-N-ACETYLGLUCOSAMINE--N-ACETYLMURAMYL-(PENTAPEPTIDE) PYROPHOSPHORYL-UNDECAPRENOL N-ACETYLGLUCOSAMINE TRANSFERASE"/>
    <property type="match status" value="1"/>
</dbReference>
<dbReference type="PANTHER" id="PTHR21015">
    <property type="entry name" value="UDP-N-ACETYLGLUCOSAMINE--N-ACETYLMURAMYL-(PENTAPEPTIDE) PYROPHOSPHORYL-UNDECAPRENOL N-ACETYLGLUCOSAMINE TRANSFERASE 1"/>
    <property type="match status" value="1"/>
</dbReference>
<dbReference type="Pfam" id="PF04101">
    <property type="entry name" value="Glyco_tran_28_C"/>
    <property type="match status" value="1"/>
</dbReference>
<dbReference type="Pfam" id="PF03033">
    <property type="entry name" value="Glyco_transf_28"/>
    <property type="match status" value="1"/>
</dbReference>
<dbReference type="SUPFAM" id="SSF53756">
    <property type="entry name" value="UDP-Glycosyltransferase/glycogen phosphorylase"/>
    <property type="match status" value="1"/>
</dbReference>
<name>MURG_STRGC</name>
<sequence length="356" mass="39787">MKKILFTGGGTVGHVTLNLLLIPKFIKEGWQVHYIGDKNGIEYQEIQKSGLDVTFHSVATGKLRRYFSWQNLLDGFKVIWGIFQSLSIMLKVRPQALFSKGGFVSVPPVIAARLSGVPVYVHESDLSIGLANKIAYKCATKMYATFEQPSSLTKIEHVGAVTKVSGTKSDLPQELEEIRQYFDKELPTLLFVGGSAGAKVFNDFVSQNQATLTERYNVINLTGDASLDVLSDRLFRRAYVTDLYQPLMDLADVVVTRGGSNTIFELLAMAKLHIIVPLGREASRGDQIENADYFVKKGYAVKLEEEQLTLEGLEASVEQILRDKNTYYQAMKNSHEIKSVEDFYAVLKNDINKGKK</sequence>
<comment type="function">
    <text evidence="1">Cell wall formation. Catalyzes the transfer of a GlcNAc subunit on undecaprenyl-pyrophosphoryl-MurNAc-pentapeptide (lipid intermediate I) to form undecaprenyl-pyrophosphoryl-MurNAc-(pentapeptide)GlcNAc (lipid intermediate II).</text>
</comment>
<comment type="catalytic activity">
    <reaction evidence="1">
        <text>Mur2Ac(oyl-L-Ala-gamma-D-Glu-L-Lys-D-Ala-D-Ala)-di-trans,octa-cis-undecaprenyl diphosphate + UDP-N-acetyl-alpha-D-glucosamine = beta-D-GlcNAc-(1-&gt;4)-Mur2Ac(oyl-L-Ala-gamma-D-Glu-L-Lys-D-Ala-D-Ala)-di-trans,octa-cis-undecaprenyl diphosphate + UDP + H(+)</text>
        <dbReference type="Rhea" id="RHEA:23192"/>
        <dbReference type="ChEBI" id="CHEBI:15378"/>
        <dbReference type="ChEBI" id="CHEBI:57705"/>
        <dbReference type="ChEBI" id="CHEBI:58223"/>
        <dbReference type="ChEBI" id="CHEBI:60032"/>
        <dbReference type="ChEBI" id="CHEBI:60033"/>
        <dbReference type="EC" id="2.4.1.227"/>
    </reaction>
</comment>
<comment type="pathway">
    <text evidence="1">Cell wall biogenesis; peptidoglycan biosynthesis.</text>
</comment>
<comment type="subcellular location">
    <subcellularLocation>
        <location evidence="1">Cell membrane</location>
        <topology evidence="1">Peripheral membrane protein</topology>
        <orientation evidence="1">Cytoplasmic side</orientation>
    </subcellularLocation>
</comment>
<comment type="similarity">
    <text evidence="1">Belongs to the glycosyltransferase 28 family. MurG subfamily.</text>
</comment>
<proteinExistence type="inferred from homology"/>
<evidence type="ECO:0000255" key="1">
    <source>
        <dbReference type="HAMAP-Rule" id="MF_00033"/>
    </source>
</evidence>
<organism>
    <name type="scientific">Streptococcus gordonii (strain Challis / ATCC 35105 / BCRC 15272 / CH1 / DL1 / V288)</name>
    <dbReference type="NCBI Taxonomy" id="467705"/>
    <lineage>
        <taxon>Bacteria</taxon>
        <taxon>Bacillati</taxon>
        <taxon>Bacillota</taxon>
        <taxon>Bacilli</taxon>
        <taxon>Lactobacillales</taxon>
        <taxon>Streptococcaceae</taxon>
        <taxon>Streptococcus</taxon>
    </lineage>
</organism>
<accession>A8AW15</accession>
<protein>
    <recommendedName>
        <fullName evidence="1">UDP-N-acetylglucosamine--N-acetylmuramyl-(pentapeptide) pyrophosphoryl-undecaprenol N-acetylglucosamine transferase</fullName>
        <ecNumber evidence="1">2.4.1.227</ecNumber>
    </recommendedName>
    <alternativeName>
        <fullName evidence="1">Undecaprenyl-PP-MurNAc-pentapeptide-UDPGlcNAc GlcNAc transferase</fullName>
    </alternativeName>
</protein>